<organism>
    <name type="scientific">Mus musculus</name>
    <name type="common">Mouse</name>
    <dbReference type="NCBI Taxonomy" id="10090"/>
    <lineage>
        <taxon>Eukaryota</taxon>
        <taxon>Metazoa</taxon>
        <taxon>Chordata</taxon>
        <taxon>Craniata</taxon>
        <taxon>Vertebrata</taxon>
        <taxon>Euteleostomi</taxon>
        <taxon>Mammalia</taxon>
        <taxon>Eutheria</taxon>
        <taxon>Euarchontoglires</taxon>
        <taxon>Glires</taxon>
        <taxon>Rodentia</taxon>
        <taxon>Myomorpha</taxon>
        <taxon>Muroidea</taxon>
        <taxon>Muridae</taxon>
        <taxon>Murinae</taxon>
        <taxon>Mus</taxon>
        <taxon>Mus</taxon>
    </lineage>
</organism>
<protein>
    <recommendedName>
        <fullName>Succinate dehydrogenase [ubiquinone] cytochrome b small subunit, mitochondrial</fullName>
        <shortName>CybS</shortName>
    </recommendedName>
    <alternativeName>
        <fullName>CII-4</fullName>
    </alternativeName>
    <alternativeName>
        <fullName>Malate dehydrogenase [quinone] cytochrome b small subunit</fullName>
    </alternativeName>
    <alternativeName>
        <fullName>QPs3</fullName>
    </alternativeName>
    <alternativeName>
        <fullName>Succinate dehydrogenase complex subunit D</fullName>
    </alternativeName>
    <alternativeName>
        <fullName>Succinate-ubiquinone oxidoreductase cytochrome b small subunit</fullName>
    </alternativeName>
    <alternativeName>
        <fullName>Succinate-ubiquinone reductase membrane anchor subunit</fullName>
    </alternativeName>
</protein>
<keyword id="KW-0249">Electron transport</keyword>
<keyword id="KW-0349">Heme</keyword>
<keyword id="KW-0408">Iron</keyword>
<keyword id="KW-0472">Membrane</keyword>
<keyword id="KW-0479">Metal-binding</keyword>
<keyword id="KW-0496">Mitochondrion</keyword>
<keyword id="KW-0999">Mitochondrion inner membrane</keyword>
<keyword id="KW-1185">Reference proteome</keyword>
<keyword id="KW-0809">Transit peptide</keyword>
<keyword id="KW-0812">Transmembrane</keyword>
<keyword id="KW-1133">Transmembrane helix</keyword>
<keyword id="KW-0813">Transport</keyword>
<keyword id="KW-0816">Tricarboxylic acid cycle</keyword>
<accession>Q9CXV1</accession>
<accession>A6H629</accession>
<accession>Q3UX11</accession>
<comment type="function">
    <text evidence="1 2">Membrane-anchoring subunit of succinate dehydrogenase (SDH) that is involved in complex II of the mitochondrial electron transport chain and is responsible for transferring electrons from succinate to ubiquinone (coenzyme Q) (By similarity). SDH also oxidizes malate to the non-canonical enol form of oxaloacetate, enol-oxaloacetate (By similarity). Enol-oxaloacetate, which is a potent inhibitor of the succinate dehydrogenase activity, is further isomerized into keto-oxaloacetate (By similarity).</text>
</comment>
<comment type="pathway">
    <text evidence="1">Carbohydrate metabolism; tricarboxylic acid cycle.</text>
</comment>
<comment type="subunit">
    <text evidence="1">Component of complex II composed of four subunits: the flavoprotein (FP) SDHA, iron-sulfur protein (IP) SDHB, and a cytochrome b560 composed of SDHC and SDHD.</text>
</comment>
<comment type="subcellular location">
    <subcellularLocation>
        <location evidence="1">Mitochondrion inner membrane</location>
        <topology evidence="3">Multi-pass membrane protein</topology>
    </subcellularLocation>
</comment>
<comment type="similarity">
    <text evidence="4">Belongs to the CybS family.</text>
</comment>
<gene>
    <name type="primary">Sdhd</name>
</gene>
<feature type="transit peptide" description="Mitochondrion" evidence="3">
    <location>
        <begin position="1"/>
        <end position="56"/>
    </location>
</feature>
<feature type="chain" id="PRO_0000006488" description="Succinate dehydrogenase [ubiquinone] cytochrome b small subunit, mitochondrial">
    <location>
        <begin position="57"/>
        <end position="159"/>
    </location>
</feature>
<feature type="topological domain" description="Mitochondrial matrix" evidence="1">
    <location>
        <begin position="57"/>
        <end position="63"/>
    </location>
</feature>
<feature type="transmembrane region" description="Helical" evidence="1">
    <location>
        <begin position="64"/>
        <end position="85"/>
    </location>
</feature>
<feature type="topological domain" description="Mitochondrial intermembrane" evidence="1">
    <location>
        <begin position="86"/>
        <end position="90"/>
    </location>
</feature>
<feature type="transmembrane region" description="Helical" evidence="1">
    <location>
        <begin position="91"/>
        <end position="111"/>
    </location>
</feature>
<feature type="topological domain" description="Mitochondrial matrix" evidence="1">
    <location>
        <begin position="112"/>
        <end position="120"/>
    </location>
</feature>
<feature type="transmembrane region" description="Helical" evidence="1">
    <location>
        <begin position="121"/>
        <end position="142"/>
    </location>
</feature>
<feature type="topological domain" description="Mitochondrial intermembrane" evidence="1">
    <location>
        <begin position="143"/>
        <end position="159"/>
    </location>
</feature>
<feature type="binding site" description="axial binding residue" evidence="1">
    <location>
        <position position="102"/>
    </location>
    <ligand>
        <name>heme b</name>
        <dbReference type="ChEBI" id="CHEBI:60344"/>
        <note>ligand shared with SDHC</note>
    </ligand>
    <ligandPart>
        <name>Fe</name>
        <dbReference type="ChEBI" id="CHEBI:18248"/>
    </ligandPart>
</feature>
<feature type="binding site" evidence="1">
    <location>
        <position position="114"/>
    </location>
    <ligand>
        <name>a ubiquinone</name>
        <dbReference type="ChEBI" id="CHEBI:16389"/>
        <note>ligand shared with IP/SDHB</note>
    </ligand>
</feature>
<reference key="1">
    <citation type="journal article" date="2005" name="Science">
        <title>The transcriptional landscape of the mammalian genome.</title>
        <authorList>
            <person name="Carninci P."/>
            <person name="Kasukawa T."/>
            <person name="Katayama S."/>
            <person name="Gough J."/>
            <person name="Frith M.C."/>
            <person name="Maeda N."/>
            <person name="Oyama R."/>
            <person name="Ravasi T."/>
            <person name="Lenhard B."/>
            <person name="Wells C."/>
            <person name="Kodzius R."/>
            <person name="Shimokawa K."/>
            <person name="Bajic V.B."/>
            <person name="Brenner S.E."/>
            <person name="Batalov S."/>
            <person name="Forrest A.R."/>
            <person name="Zavolan M."/>
            <person name="Davis M.J."/>
            <person name="Wilming L.G."/>
            <person name="Aidinis V."/>
            <person name="Allen J.E."/>
            <person name="Ambesi-Impiombato A."/>
            <person name="Apweiler R."/>
            <person name="Aturaliya R.N."/>
            <person name="Bailey T.L."/>
            <person name="Bansal M."/>
            <person name="Baxter L."/>
            <person name="Beisel K.W."/>
            <person name="Bersano T."/>
            <person name="Bono H."/>
            <person name="Chalk A.M."/>
            <person name="Chiu K.P."/>
            <person name="Choudhary V."/>
            <person name="Christoffels A."/>
            <person name="Clutterbuck D.R."/>
            <person name="Crowe M.L."/>
            <person name="Dalla E."/>
            <person name="Dalrymple B.P."/>
            <person name="de Bono B."/>
            <person name="Della Gatta G."/>
            <person name="di Bernardo D."/>
            <person name="Down T."/>
            <person name="Engstrom P."/>
            <person name="Fagiolini M."/>
            <person name="Faulkner G."/>
            <person name="Fletcher C.F."/>
            <person name="Fukushima T."/>
            <person name="Furuno M."/>
            <person name="Futaki S."/>
            <person name="Gariboldi M."/>
            <person name="Georgii-Hemming P."/>
            <person name="Gingeras T.R."/>
            <person name="Gojobori T."/>
            <person name="Green R.E."/>
            <person name="Gustincich S."/>
            <person name="Harbers M."/>
            <person name="Hayashi Y."/>
            <person name="Hensch T.K."/>
            <person name="Hirokawa N."/>
            <person name="Hill D."/>
            <person name="Huminiecki L."/>
            <person name="Iacono M."/>
            <person name="Ikeo K."/>
            <person name="Iwama A."/>
            <person name="Ishikawa T."/>
            <person name="Jakt M."/>
            <person name="Kanapin A."/>
            <person name="Katoh M."/>
            <person name="Kawasawa Y."/>
            <person name="Kelso J."/>
            <person name="Kitamura H."/>
            <person name="Kitano H."/>
            <person name="Kollias G."/>
            <person name="Krishnan S.P."/>
            <person name="Kruger A."/>
            <person name="Kummerfeld S.K."/>
            <person name="Kurochkin I.V."/>
            <person name="Lareau L.F."/>
            <person name="Lazarevic D."/>
            <person name="Lipovich L."/>
            <person name="Liu J."/>
            <person name="Liuni S."/>
            <person name="McWilliam S."/>
            <person name="Madan Babu M."/>
            <person name="Madera M."/>
            <person name="Marchionni L."/>
            <person name="Matsuda H."/>
            <person name="Matsuzawa S."/>
            <person name="Miki H."/>
            <person name="Mignone F."/>
            <person name="Miyake S."/>
            <person name="Morris K."/>
            <person name="Mottagui-Tabar S."/>
            <person name="Mulder N."/>
            <person name="Nakano N."/>
            <person name="Nakauchi H."/>
            <person name="Ng P."/>
            <person name="Nilsson R."/>
            <person name="Nishiguchi S."/>
            <person name="Nishikawa S."/>
            <person name="Nori F."/>
            <person name="Ohara O."/>
            <person name="Okazaki Y."/>
            <person name="Orlando V."/>
            <person name="Pang K.C."/>
            <person name="Pavan W.J."/>
            <person name="Pavesi G."/>
            <person name="Pesole G."/>
            <person name="Petrovsky N."/>
            <person name="Piazza S."/>
            <person name="Reed J."/>
            <person name="Reid J.F."/>
            <person name="Ring B.Z."/>
            <person name="Ringwald M."/>
            <person name="Rost B."/>
            <person name="Ruan Y."/>
            <person name="Salzberg S.L."/>
            <person name="Sandelin A."/>
            <person name="Schneider C."/>
            <person name="Schoenbach C."/>
            <person name="Sekiguchi K."/>
            <person name="Semple C.A."/>
            <person name="Seno S."/>
            <person name="Sessa L."/>
            <person name="Sheng Y."/>
            <person name="Shibata Y."/>
            <person name="Shimada H."/>
            <person name="Shimada K."/>
            <person name="Silva D."/>
            <person name="Sinclair B."/>
            <person name="Sperling S."/>
            <person name="Stupka E."/>
            <person name="Sugiura K."/>
            <person name="Sultana R."/>
            <person name="Takenaka Y."/>
            <person name="Taki K."/>
            <person name="Tammoja K."/>
            <person name="Tan S.L."/>
            <person name="Tang S."/>
            <person name="Taylor M.S."/>
            <person name="Tegner J."/>
            <person name="Teichmann S.A."/>
            <person name="Ueda H.R."/>
            <person name="van Nimwegen E."/>
            <person name="Verardo R."/>
            <person name="Wei C.L."/>
            <person name="Yagi K."/>
            <person name="Yamanishi H."/>
            <person name="Zabarovsky E."/>
            <person name="Zhu S."/>
            <person name="Zimmer A."/>
            <person name="Hide W."/>
            <person name="Bult C."/>
            <person name="Grimmond S.M."/>
            <person name="Teasdale R.D."/>
            <person name="Liu E.T."/>
            <person name="Brusic V."/>
            <person name="Quackenbush J."/>
            <person name="Wahlestedt C."/>
            <person name="Mattick J.S."/>
            <person name="Hume D.A."/>
            <person name="Kai C."/>
            <person name="Sasaki D."/>
            <person name="Tomaru Y."/>
            <person name="Fukuda S."/>
            <person name="Kanamori-Katayama M."/>
            <person name="Suzuki M."/>
            <person name="Aoki J."/>
            <person name="Arakawa T."/>
            <person name="Iida J."/>
            <person name="Imamura K."/>
            <person name="Itoh M."/>
            <person name="Kato T."/>
            <person name="Kawaji H."/>
            <person name="Kawagashira N."/>
            <person name="Kawashima T."/>
            <person name="Kojima M."/>
            <person name="Kondo S."/>
            <person name="Konno H."/>
            <person name="Nakano K."/>
            <person name="Ninomiya N."/>
            <person name="Nishio T."/>
            <person name="Okada M."/>
            <person name="Plessy C."/>
            <person name="Shibata K."/>
            <person name="Shiraki T."/>
            <person name="Suzuki S."/>
            <person name="Tagami M."/>
            <person name="Waki K."/>
            <person name="Watahiki A."/>
            <person name="Okamura-Oho Y."/>
            <person name="Suzuki H."/>
            <person name="Kawai J."/>
            <person name="Hayashizaki Y."/>
        </authorList>
    </citation>
    <scope>NUCLEOTIDE SEQUENCE [LARGE SCALE MRNA]</scope>
    <source>
        <strain>C57BL/6J</strain>
        <tissue>Egg</tissue>
        <tissue>Head</tissue>
    </source>
</reference>
<reference key="2">
    <citation type="journal article" date="2004" name="Genome Res.">
        <title>The status, quality, and expansion of the NIH full-length cDNA project: the Mammalian Gene Collection (MGC).</title>
        <authorList>
            <consortium name="The MGC Project Team"/>
        </authorList>
    </citation>
    <scope>NUCLEOTIDE SEQUENCE [LARGE SCALE MRNA]</scope>
    <source>
        <tissue>Brain</tissue>
    </source>
</reference>
<reference key="3">
    <citation type="journal article" date="2010" name="Cell">
        <title>A tissue-specific atlas of mouse protein phosphorylation and expression.</title>
        <authorList>
            <person name="Huttlin E.L."/>
            <person name="Jedrychowski M.P."/>
            <person name="Elias J.E."/>
            <person name="Goswami T."/>
            <person name="Rad R."/>
            <person name="Beausoleil S.A."/>
            <person name="Villen J."/>
            <person name="Haas W."/>
            <person name="Sowa M.E."/>
            <person name="Gygi S.P."/>
        </authorList>
    </citation>
    <scope>IDENTIFICATION BY MASS SPECTROMETRY [LARGE SCALE ANALYSIS]</scope>
    <source>
        <tissue>Brown adipose tissue</tissue>
        <tissue>Heart</tissue>
        <tissue>Kidney</tissue>
    </source>
</reference>
<dbReference type="EMBL" id="AK013962">
    <property type="protein sequence ID" value="BAB29086.2"/>
    <property type="molecule type" value="mRNA"/>
</dbReference>
<dbReference type="EMBL" id="AK135970">
    <property type="protein sequence ID" value="BAE22752.1"/>
    <property type="molecule type" value="mRNA"/>
</dbReference>
<dbReference type="EMBL" id="BC145731">
    <property type="protein sequence ID" value="AAI45732.1"/>
    <property type="molecule type" value="mRNA"/>
</dbReference>
<dbReference type="EMBL" id="BC145733">
    <property type="protein sequence ID" value="AAI45734.1"/>
    <property type="molecule type" value="mRNA"/>
</dbReference>
<dbReference type="CCDS" id="CCDS40623.1"/>
<dbReference type="RefSeq" id="NP_080124.1">
    <property type="nucleotide sequence ID" value="NM_025848.3"/>
</dbReference>
<dbReference type="SMR" id="Q9CXV1"/>
<dbReference type="BioGRID" id="211813">
    <property type="interactions" value="6"/>
</dbReference>
<dbReference type="ComplexPortal" id="CPX-562">
    <property type="entry name" value="Mitochondrial respiratory chain complex II"/>
</dbReference>
<dbReference type="CORUM" id="Q9CXV1"/>
<dbReference type="FunCoup" id="Q9CXV1">
    <property type="interactions" value="1638"/>
</dbReference>
<dbReference type="STRING" id="10090.ENSMUSP00000000175"/>
<dbReference type="SwissPalm" id="Q9CXV1"/>
<dbReference type="jPOST" id="Q9CXV1"/>
<dbReference type="PaxDb" id="10090-ENSMUSP00000000175"/>
<dbReference type="PeptideAtlas" id="Q9CXV1"/>
<dbReference type="ProteomicsDB" id="279866"/>
<dbReference type="Pumba" id="Q9CXV1"/>
<dbReference type="TopDownProteomics" id="Q9CXV1"/>
<dbReference type="DNASU" id="66925"/>
<dbReference type="Ensembl" id="ENSMUST00000000175.6">
    <property type="protein sequence ID" value="ENSMUSP00000000175.5"/>
    <property type="gene ID" value="ENSMUSG00000000171.6"/>
</dbReference>
<dbReference type="GeneID" id="66925"/>
<dbReference type="KEGG" id="mmu:66925"/>
<dbReference type="UCSC" id="uc009pjv.2">
    <property type="organism name" value="mouse"/>
</dbReference>
<dbReference type="AGR" id="MGI:1914175"/>
<dbReference type="CTD" id="6392"/>
<dbReference type="MGI" id="MGI:1914175">
    <property type="gene designation" value="Sdhd"/>
</dbReference>
<dbReference type="VEuPathDB" id="HostDB:ENSMUSG00000000171"/>
<dbReference type="eggNOG" id="KOG4097">
    <property type="taxonomic scope" value="Eukaryota"/>
</dbReference>
<dbReference type="GeneTree" id="ENSGT00390000010003"/>
<dbReference type="HOGENOM" id="CLU_096618_1_1_1"/>
<dbReference type="InParanoid" id="Q9CXV1"/>
<dbReference type="OMA" id="VMHQHWG"/>
<dbReference type="OrthoDB" id="18577at2759"/>
<dbReference type="PhylomeDB" id="Q9CXV1"/>
<dbReference type="TreeFam" id="TF313310"/>
<dbReference type="Reactome" id="R-MMU-71403">
    <property type="pathway name" value="Citric acid cycle (TCA cycle)"/>
</dbReference>
<dbReference type="Reactome" id="R-MMU-9854311">
    <property type="pathway name" value="Maturation of TCA enzymes and regulation of TCA cycle"/>
</dbReference>
<dbReference type="UniPathway" id="UPA00223"/>
<dbReference type="BioGRID-ORCS" id="66925">
    <property type="hits" value="23 hits in 80 CRISPR screens"/>
</dbReference>
<dbReference type="ChiTaRS" id="Sdhd">
    <property type="organism name" value="mouse"/>
</dbReference>
<dbReference type="PRO" id="PR:Q9CXV1"/>
<dbReference type="Proteomes" id="UP000000589">
    <property type="component" value="Chromosome 9"/>
</dbReference>
<dbReference type="RNAct" id="Q9CXV1">
    <property type="molecule type" value="protein"/>
</dbReference>
<dbReference type="Bgee" id="ENSMUSG00000000171">
    <property type="expression patterns" value="Expressed in right kidney and 287 other cell types or tissues"/>
</dbReference>
<dbReference type="GO" id="GO:0005743">
    <property type="term" value="C:mitochondrial inner membrane"/>
    <property type="evidence" value="ECO:0000250"/>
    <property type="project" value="UniProtKB"/>
</dbReference>
<dbReference type="GO" id="GO:0005739">
    <property type="term" value="C:mitochondrion"/>
    <property type="evidence" value="ECO:0000314"/>
    <property type="project" value="MGI"/>
</dbReference>
<dbReference type="GO" id="GO:0045273">
    <property type="term" value="C:respiratory chain complex II (succinate dehydrogenase)"/>
    <property type="evidence" value="ECO:0000250"/>
    <property type="project" value="UniProtKB"/>
</dbReference>
<dbReference type="GO" id="GO:0020037">
    <property type="term" value="F:heme binding"/>
    <property type="evidence" value="ECO:0000250"/>
    <property type="project" value="UniProtKB"/>
</dbReference>
<dbReference type="GO" id="GO:0046872">
    <property type="term" value="F:metal ion binding"/>
    <property type="evidence" value="ECO:0007669"/>
    <property type="project" value="UniProtKB-KW"/>
</dbReference>
<dbReference type="GO" id="GO:0008177">
    <property type="term" value="F:succinate dehydrogenase (quinone) activity"/>
    <property type="evidence" value="ECO:0000315"/>
    <property type="project" value="MGI"/>
</dbReference>
<dbReference type="GO" id="GO:0048039">
    <property type="term" value="F:ubiquinone binding"/>
    <property type="evidence" value="ECO:0000250"/>
    <property type="project" value="UniProtKB"/>
</dbReference>
<dbReference type="GO" id="GO:0071456">
    <property type="term" value="P:cellular response to hypoxia"/>
    <property type="evidence" value="ECO:0000315"/>
    <property type="project" value="MGI"/>
</dbReference>
<dbReference type="GO" id="GO:0006121">
    <property type="term" value="P:mitochondrial electron transport, succinate to ubiquinone"/>
    <property type="evidence" value="ECO:0000303"/>
    <property type="project" value="ComplexPortal"/>
</dbReference>
<dbReference type="GO" id="GO:0042776">
    <property type="term" value="P:proton motive force-driven mitochondrial ATP synthesis"/>
    <property type="evidence" value="ECO:0000303"/>
    <property type="project" value="ComplexPortal"/>
</dbReference>
<dbReference type="GO" id="GO:0050433">
    <property type="term" value="P:regulation of catecholamine secretion"/>
    <property type="evidence" value="ECO:0000315"/>
    <property type="project" value="MGI"/>
</dbReference>
<dbReference type="GO" id="GO:0006099">
    <property type="term" value="P:tricarboxylic acid cycle"/>
    <property type="evidence" value="ECO:0000303"/>
    <property type="project" value="ComplexPortal"/>
</dbReference>
<dbReference type="CDD" id="cd03496">
    <property type="entry name" value="SQR_TypeC_CybS"/>
    <property type="match status" value="1"/>
</dbReference>
<dbReference type="FunFam" id="1.20.1300.10:FF:000009">
    <property type="entry name" value="Succinate dehydrogenase [ubiquinone] cytochrome b small subunit, mitochondrial"/>
    <property type="match status" value="1"/>
</dbReference>
<dbReference type="Gene3D" id="1.20.1300.10">
    <property type="entry name" value="Fumarate reductase/succinate dehydrogenase, transmembrane subunit"/>
    <property type="match status" value="1"/>
</dbReference>
<dbReference type="InterPro" id="IPR007992">
    <property type="entry name" value="CybS"/>
</dbReference>
<dbReference type="InterPro" id="IPR034804">
    <property type="entry name" value="SQR/QFR_C/D"/>
</dbReference>
<dbReference type="PANTHER" id="PTHR13337">
    <property type="entry name" value="SUCCINATE DEHYDROGENASE"/>
    <property type="match status" value="1"/>
</dbReference>
<dbReference type="PANTHER" id="PTHR13337:SF2">
    <property type="entry name" value="SUCCINATE DEHYDROGENASE [UBIQUINONE] CYTOCHROME B SMALL SUBUNIT, MITOCHONDRIAL"/>
    <property type="match status" value="1"/>
</dbReference>
<dbReference type="Pfam" id="PF05328">
    <property type="entry name" value="CybS"/>
    <property type="match status" value="1"/>
</dbReference>
<dbReference type="SUPFAM" id="SSF81343">
    <property type="entry name" value="Fumarate reductase respiratory complex transmembrane subunits"/>
    <property type="match status" value="1"/>
</dbReference>
<name>DHSD_MOUSE</name>
<sequence length="159" mass="17014">MAVLLKLGVLCSGQGARALLLRSRVVRPAYVSAFLQDQPTQGRCGTQHIHLSPSHHSGSKAASLHWTSERVVSVLLLGLIPAGYLNPCSVVDYSLAAALTLHSHWGLGQVVTDYVHGDTLPKAARAGLLALSALTFAGLCYFNYHDVGICRAVAMLWKL</sequence>
<evidence type="ECO:0000250" key="1">
    <source>
        <dbReference type="UniProtKB" id="O14521"/>
    </source>
</evidence>
<evidence type="ECO:0000250" key="2">
    <source>
        <dbReference type="UniProtKB" id="Q95123"/>
    </source>
</evidence>
<evidence type="ECO:0000255" key="3"/>
<evidence type="ECO:0000305" key="4"/>
<proteinExistence type="evidence at protein level"/>